<feature type="chain" id="PRO_1000060408" description="Ion-translocating oxidoreductase complex subunit E">
    <location>
        <begin position="1"/>
        <end position="231"/>
    </location>
</feature>
<feature type="transmembrane region" description="Helical" evidence="1">
    <location>
        <begin position="18"/>
        <end position="38"/>
    </location>
</feature>
<feature type="transmembrane region" description="Helical" evidence="1">
    <location>
        <begin position="39"/>
        <end position="59"/>
    </location>
</feature>
<feature type="transmembrane region" description="Helical" evidence="1">
    <location>
        <begin position="63"/>
        <end position="83"/>
    </location>
</feature>
<feature type="transmembrane region" description="Helical" evidence="1">
    <location>
        <begin position="86"/>
        <end position="106"/>
    </location>
</feature>
<feature type="transmembrane region" description="Helical" evidence="1">
    <location>
        <begin position="125"/>
        <end position="145"/>
    </location>
</feature>
<feature type="transmembrane region" description="Helical" evidence="1">
    <location>
        <begin position="182"/>
        <end position="202"/>
    </location>
</feature>
<protein>
    <recommendedName>
        <fullName evidence="1">Ion-translocating oxidoreductase complex subunit E</fullName>
        <ecNumber evidence="1">7.-.-.-</ecNumber>
    </recommendedName>
    <alternativeName>
        <fullName evidence="1">Rsx electron transport complex subunit E</fullName>
    </alternativeName>
</protein>
<name>RSXE_ECOHS</name>
<dbReference type="EC" id="7.-.-.-" evidence="1"/>
<dbReference type="EMBL" id="CP000802">
    <property type="protein sequence ID" value="ABV06029.1"/>
    <property type="molecule type" value="Genomic_DNA"/>
</dbReference>
<dbReference type="RefSeq" id="WP_001289652.1">
    <property type="nucleotide sequence ID" value="NC_009800.1"/>
</dbReference>
<dbReference type="SMR" id="A8A0H5"/>
<dbReference type="KEGG" id="ecx:EcHS_A1708"/>
<dbReference type="HOGENOM" id="CLU_046659_1_0_6"/>
<dbReference type="GO" id="GO:0005886">
    <property type="term" value="C:plasma membrane"/>
    <property type="evidence" value="ECO:0007669"/>
    <property type="project" value="UniProtKB-SubCell"/>
</dbReference>
<dbReference type="GO" id="GO:0022900">
    <property type="term" value="P:electron transport chain"/>
    <property type="evidence" value="ECO:0007669"/>
    <property type="project" value="UniProtKB-UniRule"/>
</dbReference>
<dbReference type="HAMAP" id="MF_00478">
    <property type="entry name" value="RsxE_RnfE"/>
    <property type="match status" value="1"/>
</dbReference>
<dbReference type="InterPro" id="IPR003667">
    <property type="entry name" value="NqrDE/RnfAE"/>
</dbReference>
<dbReference type="InterPro" id="IPR010968">
    <property type="entry name" value="RnfE"/>
</dbReference>
<dbReference type="NCBIfam" id="NF009070">
    <property type="entry name" value="PRK12405.1"/>
    <property type="match status" value="1"/>
</dbReference>
<dbReference type="NCBIfam" id="TIGR01948">
    <property type="entry name" value="rnfE"/>
    <property type="match status" value="1"/>
</dbReference>
<dbReference type="PANTHER" id="PTHR30586">
    <property type="entry name" value="ELECTRON TRANSPORT COMPLEX PROTEIN RNFE"/>
    <property type="match status" value="1"/>
</dbReference>
<dbReference type="PANTHER" id="PTHR30586:SF0">
    <property type="entry name" value="ION-TRANSLOCATING OXIDOREDUCTASE COMPLEX SUBUNIT E"/>
    <property type="match status" value="1"/>
</dbReference>
<dbReference type="Pfam" id="PF02508">
    <property type="entry name" value="Rnf-Nqr"/>
    <property type="match status" value="1"/>
</dbReference>
<dbReference type="PIRSF" id="PIRSF006102">
    <property type="entry name" value="NQR_DE"/>
    <property type="match status" value="1"/>
</dbReference>
<organism>
    <name type="scientific">Escherichia coli O9:H4 (strain HS)</name>
    <dbReference type="NCBI Taxonomy" id="331112"/>
    <lineage>
        <taxon>Bacteria</taxon>
        <taxon>Pseudomonadati</taxon>
        <taxon>Pseudomonadota</taxon>
        <taxon>Gammaproteobacteria</taxon>
        <taxon>Enterobacterales</taxon>
        <taxon>Enterobacteriaceae</taxon>
        <taxon>Escherichia</taxon>
    </lineage>
</organism>
<evidence type="ECO:0000255" key="1">
    <source>
        <dbReference type="HAMAP-Rule" id="MF_00478"/>
    </source>
</evidence>
<accession>A8A0H5</accession>
<sequence>MSEIKDVIVQGLWKNNSALVQLLGLCPLLAVTSTATNALGLGLATTLVLTLTNLTISTLRHWTPAEIRIPIYVMIIASVVSAVQMLINAYAFGLYQSLGIFIPLIVTNCIVVGRAEAFAAKKGPALSALDGFSIGMGATCAMFVLGSLREIIGNGTLFDGADALLGSWAKVLRVEIFHTDSPFLLAMLPPGAFIGLGLMLAGKYLIDERMKKRRAEAAAERALPNGETGNV</sequence>
<gene>
    <name evidence="1" type="primary">rsxE</name>
    <name type="synonym">rnfE</name>
    <name type="ordered locus">EcHS_A1708</name>
</gene>
<proteinExistence type="inferred from homology"/>
<comment type="function">
    <text evidence="1">Part of a membrane-bound complex that couples electron transfer with translocation of ions across the membrane. Required to maintain the reduced state of SoxR.</text>
</comment>
<comment type="subunit">
    <text evidence="1">The complex is composed of six subunits: RsxA, RsxB, RsxC, RsxD, RsxE and RsxG.</text>
</comment>
<comment type="subcellular location">
    <subcellularLocation>
        <location evidence="1">Cell inner membrane</location>
        <topology evidence="1">Multi-pass membrane protein</topology>
    </subcellularLocation>
</comment>
<comment type="similarity">
    <text evidence="1">Belongs to the NqrDE/RnfAE family.</text>
</comment>
<reference key="1">
    <citation type="journal article" date="2008" name="J. Bacteriol.">
        <title>The pangenome structure of Escherichia coli: comparative genomic analysis of E. coli commensal and pathogenic isolates.</title>
        <authorList>
            <person name="Rasko D.A."/>
            <person name="Rosovitz M.J."/>
            <person name="Myers G.S.A."/>
            <person name="Mongodin E.F."/>
            <person name="Fricke W.F."/>
            <person name="Gajer P."/>
            <person name="Crabtree J."/>
            <person name="Sebaihia M."/>
            <person name="Thomson N.R."/>
            <person name="Chaudhuri R."/>
            <person name="Henderson I.R."/>
            <person name="Sperandio V."/>
            <person name="Ravel J."/>
        </authorList>
    </citation>
    <scope>NUCLEOTIDE SEQUENCE [LARGE SCALE GENOMIC DNA]</scope>
    <source>
        <strain>HS</strain>
    </source>
</reference>
<keyword id="KW-0997">Cell inner membrane</keyword>
<keyword id="KW-1003">Cell membrane</keyword>
<keyword id="KW-0249">Electron transport</keyword>
<keyword id="KW-0472">Membrane</keyword>
<keyword id="KW-1278">Translocase</keyword>
<keyword id="KW-0812">Transmembrane</keyword>
<keyword id="KW-1133">Transmembrane helix</keyword>
<keyword id="KW-0813">Transport</keyword>